<protein>
    <recommendedName>
        <fullName>Phosphoinositide 3-kinase adapter protein 1</fullName>
    </recommendedName>
    <alternativeName>
        <fullName>B-cell adapter for phosphoinositide 3-kinase</fullName>
    </alternativeName>
    <alternativeName>
        <fullName>B-cell phosphoinositide 3-kinase adapter protein 1</fullName>
    </alternativeName>
</protein>
<proteinExistence type="evidence at protein level"/>
<accession>Q9EQ32</accession>
<accession>Q2KHL6</accession>
<accession>Q3TBW6</accession>
<accession>Q3TC39</accession>
<accession>Q3U5J3</accession>
<accession>Q8BN25</accession>
<accession>Q8C2Y4</accession>
<gene>
    <name type="primary">Pik3ap1</name>
    <name type="synonym">Bcap</name>
</gene>
<organism>
    <name type="scientific">Mus musculus</name>
    <name type="common">Mouse</name>
    <dbReference type="NCBI Taxonomy" id="10090"/>
    <lineage>
        <taxon>Eukaryota</taxon>
        <taxon>Metazoa</taxon>
        <taxon>Chordata</taxon>
        <taxon>Craniata</taxon>
        <taxon>Vertebrata</taxon>
        <taxon>Euteleostomi</taxon>
        <taxon>Mammalia</taxon>
        <taxon>Eutheria</taxon>
        <taxon>Euarchontoglires</taxon>
        <taxon>Glires</taxon>
        <taxon>Rodentia</taxon>
        <taxon>Myomorpha</taxon>
        <taxon>Muroidea</taxon>
        <taxon>Muridae</taxon>
        <taxon>Murinae</taxon>
        <taxon>Mus</taxon>
        <taxon>Mus</taxon>
    </lineage>
</organism>
<evidence type="ECO:0000250" key="1"/>
<evidence type="ECO:0000250" key="2">
    <source>
        <dbReference type="UniProtKB" id="Q6ZUJ8"/>
    </source>
</evidence>
<evidence type="ECO:0000255" key="3">
    <source>
        <dbReference type="PROSITE-ProRule" id="PRU00204"/>
    </source>
</evidence>
<evidence type="ECO:0000255" key="4">
    <source>
        <dbReference type="PROSITE-ProRule" id="PRU00707"/>
    </source>
</evidence>
<evidence type="ECO:0000256" key="5">
    <source>
        <dbReference type="SAM" id="MobiDB-lite"/>
    </source>
</evidence>
<evidence type="ECO:0000269" key="6">
    <source>
    </source>
</evidence>
<evidence type="ECO:0000269" key="7">
    <source>
    </source>
</evidence>
<evidence type="ECO:0000269" key="8">
    <source>
    </source>
</evidence>
<evidence type="ECO:0000269" key="9">
    <source>
    </source>
</evidence>
<evidence type="ECO:0000269" key="10">
    <source>
    </source>
</evidence>
<evidence type="ECO:0000269" key="11">
    <source>
    </source>
</evidence>
<evidence type="ECO:0000269" key="12">
    <source>
    </source>
</evidence>
<evidence type="ECO:0000269" key="13">
    <source>
    </source>
</evidence>
<evidence type="ECO:0000269" key="14">
    <source>
    </source>
</evidence>
<evidence type="ECO:0000303" key="15">
    <source>
    </source>
</evidence>
<evidence type="ECO:0000305" key="16"/>
<evidence type="ECO:0000305" key="17">
    <source>
    </source>
</evidence>
<evidence type="ECO:0000305" key="18">
    <source>
    </source>
</evidence>
<evidence type="ECO:0000305" key="19">
    <source>
    </source>
</evidence>
<evidence type="ECO:0000305" key="20">
    <source>
    </source>
</evidence>
<dbReference type="EMBL" id="AF293806">
    <property type="protein sequence ID" value="AAG48584.1"/>
    <property type="molecule type" value="mRNA"/>
</dbReference>
<dbReference type="EMBL" id="AK087722">
    <property type="protein sequence ID" value="BAC39980.1"/>
    <property type="molecule type" value="mRNA"/>
</dbReference>
<dbReference type="EMBL" id="AK089785">
    <property type="protein sequence ID" value="BAC40962.1"/>
    <property type="molecule type" value="mRNA"/>
</dbReference>
<dbReference type="EMBL" id="AK150114">
    <property type="protein sequence ID" value="BAE29318.1"/>
    <property type="molecule type" value="mRNA"/>
</dbReference>
<dbReference type="EMBL" id="AK153548">
    <property type="protein sequence ID" value="BAE32085.1"/>
    <property type="molecule type" value="mRNA"/>
</dbReference>
<dbReference type="EMBL" id="AK170130">
    <property type="protein sequence ID" value="BAE41584.1"/>
    <property type="molecule type" value="mRNA"/>
</dbReference>
<dbReference type="EMBL" id="AK170925">
    <property type="protein sequence ID" value="BAE42118.1"/>
    <property type="molecule type" value="mRNA"/>
</dbReference>
<dbReference type="EMBL" id="AK171021">
    <property type="protein sequence ID" value="BAE42191.1"/>
    <property type="molecule type" value="mRNA"/>
</dbReference>
<dbReference type="EMBL" id="BC113141">
    <property type="protein sequence ID" value="AAI13142.1"/>
    <property type="molecule type" value="mRNA"/>
</dbReference>
<dbReference type="CCDS" id="CCDS37987.1">
    <molecule id="Q9EQ32-1"/>
</dbReference>
<dbReference type="RefSeq" id="NP_113553.1">
    <molecule id="Q9EQ32-1"/>
    <property type="nucleotide sequence ID" value="NM_031376.4"/>
</dbReference>
<dbReference type="RefSeq" id="XP_006527535.1">
    <molecule id="Q9EQ32-2"/>
    <property type="nucleotide sequence ID" value="XM_006527472.4"/>
</dbReference>
<dbReference type="SMR" id="Q9EQ32"/>
<dbReference type="BioGRID" id="219934">
    <property type="interactions" value="2"/>
</dbReference>
<dbReference type="CORUM" id="Q9EQ32"/>
<dbReference type="FunCoup" id="Q9EQ32">
    <property type="interactions" value="1074"/>
</dbReference>
<dbReference type="IntAct" id="Q9EQ32">
    <property type="interactions" value="7"/>
</dbReference>
<dbReference type="STRING" id="10090.ENSMUSP00000052777"/>
<dbReference type="GlyGen" id="Q9EQ32">
    <property type="glycosylation" value="1 site"/>
</dbReference>
<dbReference type="iPTMnet" id="Q9EQ32"/>
<dbReference type="PhosphoSitePlus" id="Q9EQ32"/>
<dbReference type="SwissPalm" id="Q9EQ32"/>
<dbReference type="jPOST" id="Q9EQ32"/>
<dbReference type="PaxDb" id="10090-ENSMUSP00000052777"/>
<dbReference type="PeptideAtlas" id="Q9EQ32"/>
<dbReference type="ProteomicsDB" id="277187">
    <molecule id="Q9EQ32-1"/>
</dbReference>
<dbReference type="ProteomicsDB" id="277188">
    <molecule id="Q9EQ32-2"/>
</dbReference>
<dbReference type="ProteomicsDB" id="277189">
    <molecule id="Q9EQ32-3"/>
</dbReference>
<dbReference type="Antibodypedia" id="30771">
    <property type="antibodies" value="381 antibodies from 23 providers"/>
</dbReference>
<dbReference type="DNASU" id="83490"/>
<dbReference type="Ensembl" id="ENSMUST00000059672.9">
    <molecule id="Q9EQ32-1"/>
    <property type="protein sequence ID" value="ENSMUSP00000052777.8"/>
    <property type="gene ID" value="ENSMUSG00000025017.11"/>
</dbReference>
<dbReference type="GeneID" id="83490"/>
<dbReference type="KEGG" id="mmu:83490"/>
<dbReference type="UCSC" id="uc008hlu.1">
    <molecule id="Q9EQ32-1"/>
    <property type="organism name" value="mouse"/>
</dbReference>
<dbReference type="UCSC" id="uc008hlv.1">
    <molecule id="Q9EQ32-3"/>
    <property type="organism name" value="mouse"/>
</dbReference>
<dbReference type="AGR" id="MGI:1933177"/>
<dbReference type="CTD" id="118788"/>
<dbReference type="MGI" id="MGI:1933177">
    <property type="gene designation" value="Pik3ap1"/>
</dbReference>
<dbReference type="VEuPathDB" id="HostDB:ENSMUSG00000025017"/>
<dbReference type="eggNOG" id="ENOG502QS94">
    <property type="taxonomic scope" value="Eukaryota"/>
</dbReference>
<dbReference type="GeneTree" id="ENSGT00390000008787"/>
<dbReference type="HOGENOM" id="CLU_012993_0_0_1"/>
<dbReference type="InParanoid" id="Q9EQ32"/>
<dbReference type="OMA" id="YYTSMGE"/>
<dbReference type="OrthoDB" id="8192811at2759"/>
<dbReference type="PhylomeDB" id="Q9EQ32"/>
<dbReference type="TreeFam" id="TF328570"/>
<dbReference type="Reactome" id="R-MMU-1257604">
    <property type="pathway name" value="PIP3 activates AKT signaling"/>
</dbReference>
<dbReference type="Reactome" id="R-MMU-6811558">
    <property type="pathway name" value="PI5P, PP2A and IER3 Regulate PI3K/AKT Signaling"/>
</dbReference>
<dbReference type="Reactome" id="R-MMU-983695">
    <property type="pathway name" value="Antigen activates B Cell Receptor (BCR) leading to generation of second messengers"/>
</dbReference>
<dbReference type="BioGRID-ORCS" id="83490">
    <property type="hits" value="5 hits in 79 CRISPR screens"/>
</dbReference>
<dbReference type="ChiTaRS" id="Pik3ap1">
    <property type="organism name" value="mouse"/>
</dbReference>
<dbReference type="PRO" id="PR:Q9EQ32"/>
<dbReference type="Proteomes" id="UP000000589">
    <property type="component" value="Chromosome 19"/>
</dbReference>
<dbReference type="RNAct" id="Q9EQ32">
    <property type="molecule type" value="protein"/>
</dbReference>
<dbReference type="Bgee" id="ENSMUSG00000025017">
    <property type="expression patterns" value="Expressed in granulocyte and 103 other cell types or tissues"/>
</dbReference>
<dbReference type="GO" id="GO:0005737">
    <property type="term" value="C:cytoplasm"/>
    <property type="evidence" value="ECO:0000314"/>
    <property type="project" value="MGI"/>
</dbReference>
<dbReference type="GO" id="GO:0005829">
    <property type="term" value="C:cytosol"/>
    <property type="evidence" value="ECO:0000314"/>
    <property type="project" value="UniProtKB"/>
</dbReference>
<dbReference type="GO" id="GO:0016020">
    <property type="term" value="C:membrane"/>
    <property type="evidence" value="ECO:0000314"/>
    <property type="project" value="UniProtKB"/>
</dbReference>
<dbReference type="GO" id="GO:0005886">
    <property type="term" value="C:plasma membrane"/>
    <property type="evidence" value="ECO:0000314"/>
    <property type="project" value="MGI"/>
</dbReference>
<dbReference type="GO" id="GO:0042802">
    <property type="term" value="F:identical protein binding"/>
    <property type="evidence" value="ECO:0000353"/>
    <property type="project" value="IntAct"/>
</dbReference>
<dbReference type="GO" id="GO:0036312">
    <property type="term" value="F:phosphatidylinositol 3-kinase regulatory subunit binding"/>
    <property type="evidence" value="ECO:0000314"/>
    <property type="project" value="UniProtKB"/>
</dbReference>
<dbReference type="GO" id="GO:0034122">
    <property type="term" value="P:negative regulation of toll-like receptor signaling pathway"/>
    <property type="evidence" value="ECO:0000315"/>
    <property type="project" value="UniProtKB"/>
</dbReference>
<dbReference type="GO" id="GO:0051897">
    <property type="term" value="P:positive regulation of phosphatidylinositol 3-kinase/protein kinase B signal transduction"/>
    <property type="evidence" value="ECO:0000315"/>
    <property type="project" value="UniProtKB"/>
</dbReference>
<dbReference type="GO" id="GO:0034123">
    <property type="term" value="P:positive regulation of toll-like receptor signaling pathway"/>
    <property type="evidence" value="ECO:0000315"/>
    <property type="project" value="UniProtKB"/>
</dbReference>
<dbReference type="GO" id="GO:0050727">
    <property type="term" value="P:regulation of inflammatory response"/>
    <property type="evidence" value="ECO:0000315"/>
    <property type="project" value="UniProtKB"/>
</dbReference>
<dbReference type="GO" id="GO:0034134">
    <property type="term" value="P:toll-like receptor 2 signaling pathway"/>
    <property type="evidence" value="ECO:0000315"/>
    <property type="project" value="UniProtKB"/>
</dbReference>
<dbReference type="GO" id="GO:0034142">
    <property type="term" value="P:toll-like receptor 4 signaling pathway"/>
    <property type="evidence" value="ECO:0000315"/>
    <property type="project" value="UniProtKB"/>
</dbReference>
<dbReference type="GO" id="GO:0034154">
    <property type="term" value="P:toll-like receptor 7 signaling pathway"/>
    <property type="evidence" value="ECO:0000315"/>
    <property type="project" value="UniProtKB"/>
</dbReference>
<dbReference type="GO" id="GO:0034162">
    <property type="term" value="P:toll-like receptor 9 signaling pathway"/>
    <property type="evidence" value="ECO:0000315"/>
    <property type="project" value="UniProtKB"/>
</dbReference>
<dbReference type="FunFam" id="3.40.50.10140:FF:000010">
    <property type="entry name" value="phosphoinositide 3-kinase adapter protein 1"/>
    <property type="match status" value="1"/>
</dbReference>
<dbReference type="Gene3D" id="3.40.50.10140">
    <property type="entry name" value="Toll/interleukin-1 receptor homology (TIR) domain"/>
    <property type="match status" value="1"/>
</dbReference>
<dbReference type="InterPro" id="IPR052446">
    <property type="entry name" value="B-cell_PI3K-Signaling_Adptrs"/>
</dbReference>
<dbReference type="InterPro" id="IPR017893">
    <property type="entry name" value="DBB_domain"/>
</dbReference>
<dbReference type="InterPro" id="IPR041340">
    <property type="entry name" value="PIK3AP1_TIR"/>
</dbReference>
<dbReference type="InterPro" id="IPR000157">
    <property type="entry name" value="TIR_dom"/>
</dbReference>
<dbReference type="InterPro" id="IPR035897">
    <property type="entry name" value="Toll_tir_struct_dom_sf"/>
</dbReference>
<dbReference type="PANTHER" id="PTHR16267">
    <property type="entry name" value="BANK1/PIK3AP1 FAMILY MEMBER"/>
    <property type="match status" value="1"/>
</dbReference>
<dbReference type="PANTHER" id="PTHR16267:SF12">
    <property type="entry name" value="PHOSPHOINOSITIDE 3-KINASE ADAPTER PROTEIN 1"/>
    <property type="match status" value="1"/>
</dbReference>
<dbReference type="Pfam" id="PF14545">
    <property type="entry name" value="DBB"/>
    <property type="match status" value="1"/>
</dbReference>
<dbReference type="Pfam" id="PF18567">
    <property type="entry name" value="TIR_3"/>
    <property type="match status" value="1"/>
</dbReference>
<dbReference type="SMART" id="SM01282">
    <property type="entry name" value="DBB"/>
    <property type="match status" value="1"/>
</dbReference>
<dbReference type="PROSITE" id="PS51376">
    <property type="entry name" value="DBB"/>
    <property type="match status" value="1"/>
</dbReference>
<dbReference type="PROSITE" id="PS50104">
    <property type="entry name" value="TIR"/>
    <property type="match status" value="1"/>
</dbReference>
<reference key="1">
    <citation type="journal article" date="2000" name="Immunity">
        <title>BCAP: the tyrosine kinase substrate that connects B cell receptor to phosphoinositide 3-kinase activation.</title>
        <authorList>
            <person name="Okada T."/>
            <person name="Maeda A."/>
            <person name="Iwamatsu A."/>
            <person name="Gotoh K."/>
            <person name="Kurosaki T."/>
        </authorList>
    </citation>
    <scope>NUCLEOTIDE SEQUENCE [MRNA] (ISOFORM 1)</scope>
    <scope>TISSUE SPECIFICITY</scope>
    <scope>INTERACTION WITH PIK3R1</scope>
    <scope>PHOSPHORYLATION AT TYR-264; TYR-420; TYR-445 AND TYR-460</scope>
</reference>
<reference key="2">
    <citation type="journal article" date="2005" name="Science">
        <title>The transcriptional landscape of the mammalian genome.</title>
        <authorList>
            <person name="Carninci P."/>
            <person name="Kasukawa T."/>
            <person name="Katayama S."/>
            <person name="Gough J."/>
            <person name="Frith M.C."/>
            <person name="Maeda N."/>
            <person name="Oyama R."/>
            <person name="Ravasi T."/>
            <person name="Lenhard B."/>
            <person name="Wells C."/>
            <person name="Kodzius R."/>
            <person name="Shimokawa K."/>
            <person name="Bajic V.B."/>
            <person name="Brenner S.E."/>
            <person name="Batalov S."/>
            <person name="Forrest A.R."/>
            <person name="Zavolan M."/>
            <person name="Davis M.J."/>
            <person name="Wilming L.G."/>
            <person name="Aidinis V."/>
            <person name="Allen J.E."/>
            <person name="Ambesi-Impiombato A."/>
            <person name="Apweiler R."/>
            <person name="Aturaliya R.N."/>
            <person name="Bailey T.L."/>
            <person name="Bansal M."/>
            <person name="Baxter L."/>
            <person name="Beisel K.W."/>
            <person name="Bersano T."/>
            <person name="Bono H."/>
            <person name="Chalk A.M."/>
            <person name="Chiu K.P."/>
            <person name="Choudhary V."/>
            <person name="Christoffels A."/>
            <person name="Clutterbuck D.R."/>
            <person name="Crowe M.L."/>
            <person name="Dalla E."/>
            <person name="Dalrymple B.P."/>
            <person name="de Bono B."/>
            <person name="Della Gatta G."/>
            <person name="di Bernardo D."/>
            <person name="Down T."/>
            <person name="Engstrom P."/>
            <person name="Fagiolini M."/>
            <person name="Faulkner G."/>
            <person name="Fletcher C.F."/>
            <person name="Fukushima T."/>
            <person name="Furuno M."/>
            <person name="Futaki S."/>
            <person name="Gariboldi M."/>
            <person name="Georgii-Hemming P."/>
            <person name="Gingeras T.R."/>
            <person name="Gojobori T."/>
            <person name="Green R.E."/>
            <person name="Gustincich S."/>
            <person name="Harbers M."/>
            <person name="Hayashi Y."/>
            <person name="Hensch T.K."/>
            <person name="Hirokawa N."/>
            <person name="Hill D."/>
            <person name="Huminiecki L."/>
            <person name="Iacono M."/>
            <person name="Ikeo K."/>
            <person name="Iwama A."/>
            <person name="Ishikawa T."/>
            <person name="Jakt M."/>
            <person name="Kanapin A."/>
            <person name="Katoh M."/>
            <person name="Kawasawa Y."/>
            <person name="Kelso J."/>
            <person name="Kitamura H."/>
            <person name="Kitano H."/>
            <person name="Kollias G."/>
            <person name="Krishnan S.P."/>
            <person name="Kruger A."/>
            <person name="Kummerfeld S.K."/>
            <person name="Kurochkin I.V."/>
            <person name="Lareau L.F."/>
            <person name="Lazarevic D."/>
            <person name="Lipovich L."/>
            <person name="Liu J."/>
            <person name="Liuni S."/>
            <person name="McWilliam S."/>
            <person name="Madan Babu M."/>
            <person name="Madera M."/>
            <person name="Marchionni L."/>
            <person name="Matsuda H."/>
            <person name="Matsuzawa S."/>
            <person name="Miki H."/>
            <person name="Mignone F."/>
            <person name="Miyake S."/>
            <person name="Morris K."/>
            <person name="Mottagui-Tabar S."/>
            <person name="Mulder N."/>
            <person name="Nakano N."/>
            <person name="Nakauchi H."/>
            <person name="Ng P."/>
            <person name="Nilsson R."/>
            <person name="Nishiguchi S."/>
            <person name="Nishikawa S."/>
            <person name="Nori F."/>
            <person name="Ohara O."/>
            <person name="Okazaki Y."/>
            <person name="Orlando V."/>
            <person name="Pang K.C."/>
            <person name="Pavan W.J."/>
            <person name="Pavesi G."/>
            <person name="Pesole G."/>
            <person name="Petrovsky N."/>
            <person name="Piazza S."/>
            <person name="Reed J."/>
            <person name="Reid J.F."/>
            <person name="Ring B.Z."/>
            <person name="Ringwald M."/>
            <person name="Rost B."/>
            <person name="Ruan Y."/>
            <person name="Salzberg S.L."/>
            <person name="Sandelin A."/>
            <person name="Schneider C."/>
            <person name="Schoenbach C."/>
            <person name="Sekiguchi K."/>
            <person name="Semple C.A."/>
            <person name="Seno S."/>
            <person name="Sessa L."/>
            <person name="Sheng Y."/>
            <person name="Shibata Y."/>
            <person name="Shimada H."/>
            <person name="Shimada K."/>
            <person name="Silva D."/>
            <person name="Sinclair B."/>
            <person name="Sperling S."/>
            <person name="Stupka E."/>
            <person name="Sugiura K."/>
            <person name="Sultana R."/>
            <person name="Takenaka Y."/>
            <person name="Taki K."/>
            <person name="Tammoja K."/>
            <person name="Tan S.L."/>
            <person name="Tang S."/>
            <person name="Taylor M.S."/>
            <person name="Tegner J."/>
            <person name="Teichmann S.A."/>
            <person name="Ueda H.R."/>
            <person name="van Nimwegen E."/>
            <person name="Verardo R."/>
            <person name="Wei C.L."/>
            <person name="Yagi K."/>
            <person name="Yamanishi H."/>
            <person name="Zabarovsky E."/>
            <person name="Zhu S."/>
            <person name="Zimmer A."/>
            <person name="Hide W."/>
            <person name="Bult C."/>
            <person name="Grimmond S.M."/>
            <person name="Teasdale R.D."/>
            <person name="Liu E.T."/>
            <person name="Brusic V."/>
            <person name="Quackenbush J."/>
            <person name="Wahlestedt C."/>
            <person name="Mattick J.S."/>
            <person name="Hume D.A."/>
            <person name="Kai C."/>
            <person name="Sasaki D."/>
            <person name="Tomaru Y."/>
            <person name="Fukuda S."/>
            <person name="Kanamori-Katayama M."/>
            <person name="Suzuki M."/>
            <person name="Aoki J."/>
            <person name="Arakawa T."/>
            <person name="Iida J."/>
            <person name="Imamura K."/>
            <person name="Itoh M."/>
            <person name="Kato T."/>
            <person name="Kawaji H."/>
            <person name="Kawagashira N."/>
            <person name="Kawashima T."/>
            <person name="Kojima M."/>
            <person name="Kondo S."/>
            <person name="Konno H."/>
            <person name="Nakano K."/>
            <person name="Ninomiya N."/>
            <person name="Nishio T."/>
            <person name="Okada M."/>
            <person name="Plessy C."/>
            <person name="Shibata K."/>
            <person name="Shiraki T."/>
            <person name="Suzuki S."/>
            <person name="Tagami M."/>
            <person name="Waki K."/>
            <person name="Watahiki A."/>
            <person name="Okamura-Oho Y."/>
            <person name="Suzuki H."/>
            <person name="Kawai J."/>
            <person name="Hayashizaki Y."/>
        </authorList>
    </citation>
    <scope>NUCLEOTIDE SEQUENCE [LARGE SCALE MRNA] (ISOFORMS 1; 2 AND 3)</scope>
    <source>
        <strain>C57BL/6J</strain>
        <strain>NOD</strain>
        <tissue>Bone marrow</tissue>
        <tissue>Ovary</tissue>
        <tissue>Spleen</tissue>
    </source>
</reference>
<reference key="3">
    <citation type="journal article" date="2004" name="Genome Res.">
        <title>The status, quality, and expansion of the NIH full-length cDNA project: the Mammalian Gene Collection (MGC).</title>
        <authorList>
            <consortium name="The MGC Project Team"/>
        </authorList>
    </citation>
    <scope>NUCLEOTIDE SEQUENCE [LARGE SCALE MRNA] (ISOFORM 1)</scope>
</reference>
<reference key="4">
    <citation type="journal article" date="2002" name="Blood">
        <title>Tyrosine phosphorylation of B-cell adaptor for phosphoinositide 3-kinase is required for Akt activation in response to CD19 engagement.</title>
        <authorList>
            <person name="Inabe K."/>
            <person name="Kurosaki T."/>
        </authorList>
    </citation>
    <scope>FUNCTION</scope>
    <scope>TYROSINE PHOSPHORYLATION (ISOFORMS 1 AND 2)</scope>
</reference>
<reference key="5">
    <citation type="journal article" date="2002" name="J. Exp. Med.">
        <title>Essential immunoregulatory role for BCAP in B cell development and function.</title>
        <authorList>
            <person name="Yamazaki T."/>
            <person name="Takeda K."/>
            <person name="Gotoh K."/>
            <person name="Takeshima H."/>
            <person name="Akira S."/>
            <person name="Kurosaki T."/>
        </authorList>
    </citation>
    <scope>FUNCTION</scope>
    <scope>DISRUPTION PHENOTYPE</scope>
</reference>
<reference key="6">
    <citation type="journal article" date="2003" name="J. Mol. Biol.">
        <title>Isolation of proteins that interact with the signal transduction molecule Dof and identification of a functional domain conserved between Dof and vertebrate BCAP.</title>
        <authorList>
            <person name="Battersby A."/>
            <person name="Csiszar A."/>
            <person name="Leptin M."/>
            <person name="Wilson R."/>
        </authorList>
    </citation>
    <scope>HOMOOLIGOMERIZATION</scope>
    <scope>DBB DOMAIN</scope>
</reference>
<reference key="7">
    <citation type="journal article" date="2003" name="Nat. Immunol.">
        <title>Contribution of BCAP to maintenance of mature B cells through c-Rel.</title>
        <authorList>
            <person name="Yamazaki T."/>
            <person name="Kurosaki T."/>
        </authorList>
    </citation>
    <scope>FUNCTION</scope>
</reference>
<reference key="8">
    <citation type="journal article" date="2008" name="Blood">
        <title>Regulation of B-cell development by BCAP and CD19 through their binding to phosphoinositide 3-kinase.</title>
        <authorList>
            <person name="Aiba Y."/>
            <person name="Kameyama M."/>
            <person name="Yamazaki T."/>
            <person name="Tedder T.F."/>
            <person name="Kurosaki T."/>
        </authorList>
    </citation>
    <scope>FUNCTION</scope>
    <scope>INTERACTION WITH PIK3R1</scope>
    <scope>PHOSPHORYLATION AT TYR-264; TYR-420; TYR-445 AND TYR-460</scope>
    <scope>MUTAGENESIS OF TYR-264; TYR-420; TYR-445 AND TYR-460</scope>
    <scope>DISRUPTION PHENOTYPE</scope>
</reference>
<reference key="9">
    <citation type="journal article" date="2008" name="Blood">
        <title>Enhanced NK cell development and function in BCAP-deficient mice.</title>
        <authorList>
            <person name="Macfarlane A.W. IV"/>
            <person name="Yamazaki T."/>
            <person name="Fang M."/>
            <person name="Sigal L.J."/>
            <person name="Kurosaki T."/>
            <person name="Campbell K.S."/>
        </authorList>
    </citation>
    <scope>FUNCTION</scope>
    <scope>TISSUE SPECIFICITY</scope>
    <scope>DISRUPTION PHENOTYPE</scope>
</reference>
<reference key="10">
    <citation type="journal article" date="2010" name="Biochem. Biophys. Res. Commun.">
        <title>Identification of BCAP-(L) as a negative regulator of the TLR signaling-induced production of IL-6 and IL-10 in macrophages by tyrosine phosphoproteomics.</title>
        <authorList>
            <person name="Matsumura T."/>
            <person name="Oyama M."/>
            <person name="Kozuka-Hata H."/>
            <person name="Ishikawa K."/>
            <person name="Inoue T."/>
            <person name="Muta T."/>
            <person name="Semba K."/>
            <person name="Inoue J."/>
        </authorList>
    </citation>
    <scope>FUNCTION IN TOLL-LIKE RECEPTOR SIGNALING (ISOFORMS 1 AND 2)</scope>
    <scope>PHOSPHORYLATION AT TYR-420; TYR-445 AND TYR-460 BY SYK</scope>
</reference>
<reference key="11">
    <citation type="journal article" date="2010" name="Cell">
        <title>A tissue-specific atlas of mouse protein phosphorylation and expression.</title>
        <authorList>
            <person name="Huttlin E.L."/>
            <person name="Jedrychowski M.P."/>
            <person name="Elias J.E."/>
            <person name="Goswami T."/>
            <person name="Rad R."/>
            <person name="Beausoleil S.A."/>
            <person name="Villen J."/>
            <person name="Haas W."/>
            <person name="Sowa M.E."/>
            <person name="Gygi S.P."/>
        </authorList>
    </citation>
    <scope>IDENTIFICATION BY MASS SPECTROMETRY [LARGE SCALE ANALYSIS]</scope>
    <source>
        <tissue>Liver</tissue>
        <tissue>Lung</tissue>
        <tissue>Pancreas</tissue>
        <tissue>Spleen</tissue>
    </source>
</reference>
<reference key="12">
    <citation type="journal article" date="2012" name="Proc. Natl. Acad. Sci. U.S.A.">
        <title>B-cell adaptor for PI3K (BCAP) negatively regulates Toll-like receptor signaling through activation of PI3K.</title>
        <authorList>
            <person name="Ni M."/>
            <person name="MacFarlane A.W. IV"/>
            <person name="Toft M."/>
            <person name="Lowell C.A."/>
            <person name="Campbell K.S."/>
            <person name="Hamerman J.A."/>
        </authorList>
    </citation>
    <scope>FUNCTION IN TOLL-LIKE RECEPTOR SIGNALING</scope>
    <scope>DISRUPTION PHENOTYPE</scope>
    <scope>PHOSPHORYLATION</scope>
    <scope>SUBCELLULAR LOCATION</scope>
</reference>
<reference key="13">
    <citation type="journal article" date="2012" name="Proc. Natl. Acad. Sci. U.S.A.">
        <title>Role for B-cell adapter for PI3K (BCAP) as a signaling adapter linking Toll-like receptors (TLRs) to serine/threonine kinases PI3K/Akt.</title>
        <authorList>
            <person name="Troutman T.D."/>
            <person name="Hu W."/>
            <person name="Fulenchek S."/>
            <person name="Yamazaki T."/>
            <person name="Kurosaki T."/>
            <person name="Bazan J.F."/>
            <person name="Pasare C."/>
        </authorList>
    </citation>
    <scope>FUNCTION IN TOLL-LIKE RECEPTOR SIGNALING</scope>
    <scope>INTERACTION WITH MYD88 AND TIRAP</scope>
    <scope>PHOSPHORYLATION</scope>
</reference>
<feature type="chain" id="PRO_0000341274" description="Phosphoinositide 3-kinase adapter protein 1">
    <location>
        <begin position="1"/>
        <end position="811"/>
    </location>
</feature>
<feature type="domain" description="TIR" evidence="3">
    <location>
        <begin position="8"/>
        <end position="146"/>
    </location>
</feature>
<feature type="domain" description="DBB" evidence="4">
    <location>
        <begin position="182"/>
        <end position="318"/>
    </location>
</feature>
<feature type="region of interest" description="Necessary and sufficient to mediate inhibition of NF-kappa-B downstream of activated TLRs; may mediate interaction with MYD88 and TIRAP" evidence="14">
    <location>
        <begin position="10"/>
        <end position="145"/>
    </location>
</feature>
<feature type="region of interest" description="Disordered" evidence="5">
    <location>
        <begin position="146"/>
        <end position="169"/>
    </location>
</feature>
<feature type="region of interest" description="Disordered" evidence="5">
    <location>
        <begin position="525"/>
        <end position="551"/>
    </location>
</feature>
<feature type="region of interest" description="Disordered" evidence="5">
    <location>
        <begin position="702"/>
        <end position="811"/>
    </location>
</feature>
<feature type="compositionally biased region" description="Pro residues" evidence="5">
    <location>
        <begin position="530"/>
        <end position="550"/>
    </location>
</feature>
<feature type="compositionally biased region" description="Basic and acidic residues" evidence="5">
    <location>
        <begin position="707"/>
        <end position="716"/>
    </location>
</feature>
<feature type="compositionally biased region" description="Low complexity" evidence="5">
    <location>
        <begin position="717"/>
        <end position="740"/>
    </location>
</feature>
<feature type="compositionally biased region" description="Pro residues" evidence="5">
    <location>
        <begin position="801"/>
        <end position="811"/>
    </location>
</feature>
<feature type="modified residue" description="Phosphotyrosine" evidence="6 10">
    <location>
        <position position="264"/>
    </location>
</feature>
<feature type="modified residue" description="Phosphotyrosine; by SYK" evidence="17 18 19">
    <location>
        <position position="420"/>
    </location>
</feature>
<feature type="modified residue" description="Phosphotyrosine; by SYK" evidence="17 18 19">
    <location>
        <position position="445"/>
    </location>
</feature>
<feature type="modified residue" description="Phosphotyrosine; by SYK" evidence="17 18 19">
    <location>
        <position position="460"/>
    </location>
</feature>
<feature type="modified residue" description="Phosphotyrosine; by ABL1" evidence="2">
    <location>
        <position position="513"/>
    </location>
</feature>
<feature type="modified residue" description="Phosphotyrosine; by ABL1" evidence="2">
    <location>
        <position position="553"/>
    </location>
</feature>
<feature type="modified residue" description="Phosphotyrosine; by ABL1" evidence="2">
    <location>
        <position position="570"/>
    </location>
</feature>
<feature type="modified residue" description="Phosphotyrosine; by ABL1" evidence="2">
    <location>
        <position position="594"/>
    </location>
</feature>
<feature type="modified residue" description="Phosphoserine" evidence="2">
    <location>
        <position position="642"/>
    </location>
</feature>
<feature type="modified residue" description="Phosphotyrosine; by ABL1" evidence="2">
    <location>
        <position position="694"/>
    </location>
</feature>
<feature type="modified residue" description="Phosphoserine" evidence="2">
    <location>
        <position position="718"/>
    </location>
</feature>
<feature type="splice variant" id="VSP_034241" description="In isoform 2." evidence="15">
    <location>
        <begin position="1"/>
        <end position="179"/>
    </location>
</feature>
<feature type="splice variant" id="VSP_034242" description="In isoform 3." evidence="15">
    <original>NSVKPASWEREQHHPYGEELYHIVD</original>
    <variation>KLSLIREAETLVFKGQVATDMACDD</variation>
    <location>
        <begin position="493"/>
        <end position="517"/>
    </location>
</feature>
<feature type="splice variant" id="VSP_034243" description="In isoform 3." evidence="15">
    <location>
        <begin position="518"/>
        <end position="811"/>
    </location>
</feature>
<feature type="mutagenesis site" description="Fails to bind PIK3R1 in a BCR-signaling dependent manner; when associated with Y-420; Y-445 and Y-460. Loss of regulatory function in Toll-like receptor signaling probably due to loss of interaction with PIK3R1; when associated with Y-420; Y-445 and Y-460. Impairs mature B-cell generation; when associated with Y-420; Y-445 and Y-460." evidence="10">
    <original>Y</original>
    <variation>F</variation>
    <location>
        <position position="264"/>
    </location>
</feature>
<feature type="mutagenesis site" description="Fails to bind PIK3R1 in a BCR-signaling dependent manner; when associated with Y-264; Y-445 and Y-460. Loss of regulatory function in Toll-like receptor signaling probably due to loss of interaction with PIK3R1; when associated with Y-264; Y-445 and Y-460. Impairs mature B-cell generation; when associated with Y-264; Y-445 and Y-460." evidence="10">
    <original>Y</original>
    <variation>F</variation>
    <location>
        <position position="420"/>
    </location>
</feature>
<feature type="mutagenesis site" description="Fails to bind PIK3R1 in a BCR-signaling dependent manner; when associated with Y-264; Y-420 and Y-460. Loss of regulatory function in Toll-like receptor signaling probably due to loss of interaction with PIK3R1; when associated with Y-264; Y-420 and Y-460. Impairs mature B-cell generation; when associated with Y-264; Y-420 and Y-460." evidence="10">
    <original>Y</original>
    <variation>F</variation>
    <location>
        <position position="445"/>
    </location>
</feature>
<feature type="mutagenesis site" description="Fails to bind PIK3R1 in a BCR-signaling dependent manner; when associated with Y-264; Y-420 and Y-445. Loss of regulatory function in Toll-like receptor signaling probably due to loss of interaction with PIK3R1; when associated with Y-264; Y-420 and Y-445. Impairs mature B-cell generation; when associated with Y-264; Y-420 and Y-445." evidence="10">
    <original>Y</original>
    <variation>F</variation>
    <location>
        <position position="460"/>
    </location>
</feature>
<feature type="sequence conflict" description="In Ref. 2; BAE42191." evidence="16" ref="2">
    <original>K</original>
    <variation>N</variation>
    <location>
        <position position="206"/>
    </location>
</feature>
<feature type="sequence conflict" description="In Ref. 2; BAE41584/BAE42118." evidence="16" ref="2">
    <original>E</original>
    <variation>G</variation>
    <location>
        <position position="414"/>
    </location>
</feature>
<feature type="sequence conflict" description="In Ref. 3; AAI13142." evidence="16" ref="3">
    <original>G</original>
    <variation>GE</variation>
    <location>
        <position position="509"/>
    </location>
</feature>
<feature type="sequence conflict" description="In Ref. 2; BAC40962/BAE42191." evidence="16" ref="2">
    <original>A</original>
    <variation>AP</variation>
    <location>
        <position position="768"/>
    </location>
</feature>
<comment type="function">
    <text evidence="7 8 9 10 11 13 14">Signaling adapter that contributes to B-cell development by linking B-cell receptor (BCR) signaling to the phosphoinositide 3-kinase (PI3K)-Akt signaling pathway. Has a complementary role to the BCR coreceptor CD19, coupling BCR and PI3K activation by providing a docking site for the PI3K subunit PIK3R1. Alternatively, links Toll-like receptor (TLR) signaling to PI3K activation, a process preventing excessive inflammatory cytokine production. Also involved in the activation of PI3K in natural killer cells. May be involved in the survival of mature B-cells via activation of REL.</text>
</comment>
<comment type="subunit">
    <text evidence="1 6 10 14 16">Homooligomer (Probable). Interacts (phosphorylated on tyrosine residues within YXXM motifs) with PIK3R1 (via SH2 domain); required for BCR- and TLR-mediated activation of phosphoinositide 3-kinase. Interacts (via polyproline C-terminal region) with ABI1 (via SH3 domain); the interaction promotes phosphorylation of PIK3AP1 by ABL1 (By similarity). May interact with MYD88 and TIRAP.</text>
</comment>
<comment type="interaction">
    <interactant intactId="EBI-643949">
        <id>Q9EQ32</id>
    </interactant>
    <interactant intactId="EBI-525108">
        <id>P22366</id>
        <label>Myd88</label>
    </interactant>
    <organismsDiffer>false</organismsDiffer>
    <experiments>2</experiments>
</comment>
<comment type="interaction">
    <interactant intactId="EBI-643949">
        <id>Q9EQ32</id>
    </interactant>
    <interactant intactId="EBI-643949">
        <id>Q9EQ32</id>
        <label>Pik3ap1</label>
    </interactant>
    <organismsDiffer>false</organismsDiffer>
    <experiments>3</experiments>
</comment>
<comment type="interaction">
    <interactant intactId="EBI-643949">
        <id>Q9EQ32</id>
    </interactant>
    <interactant intactId="EBI-6559589">
        <id>Q99JY1</id>
        <label>Tirap</label>
    </interactant>
    <organismsDiffer>false</organismsDiffer>
    <experiments>2</experiments>
</comment>
<comment type="subcellular location">
    <subcellularLocation>
        <location evidence="13">Cytoplasm</location>
    </subcellularLocation>
    <subcellularLocation>
        <location evidence="20">Cell membrane</location>
        <topology evidence="20">Peripheral membrane protein</topology>
    </subcellularLocation>
</comment>
<comment type="alternative products">
    <event type="alternative splicing"/>
    <isoform>
        <id>Q9EQ32-1</id>
        <name>1</name>
        <name>BCAP-L</name>
        <sequence type="displayed"/>
    </isoform>
    <isoform>
        <id>Q9EQ32-2</id>
        <name>2</name>
        <name>BCAP-S</name>
        <sequence type="described" ref="VSP_034241"/>
    </isoform>
    <isoform>
        <id>Q9EQ32-3</id>
        <name>3</name>
        <sequence type="described" ref="VSP_034242 VSP_034243"/>
    </isoform>
</comment>
<comment type="tissue specificity">
    <text evidence="6 11">Predominantly expressed in spleen (at protein level). Expressed at lower levels in thymus, liver and lung. Expressed in B-cells, macrophages and natural killer (NK) cells.</text>
</comment>
<comment type="domain">
    <text>The DBB domain is required for dimerization.</text>
</comment>
<comment type="PTM">
    <text evidence="1 6 10 12 13 14">Constitutively phosphorylated. Phosphorylated on tyrosine residues in C-terminal region by ABL1 (By similarity). Phosphorylated on tyrosine residues within the YXXM motifs by BTK and SYK. Isoform 1 and isoform 2 are phosphorylated on tyrosine residues, most likely within the YXXM motifs, via CD19 activation. Toll-like receptor activation induces appearance of a phosphorylated form associated with membranes.</text>
</comment>
<comment type="disruption phenotype">
    <text evidence="8 10 11 13">Mice lacking Pik3ap1 display altered B-cell maturation and impaired immune function. Pik3ap1 depletion has an opposite effect in NK cells by promoting their maturation. Mice lacking Pik3ap1 and Cd19 have severe defects in generation of immature and mature B-cells. Moreover, mice lacking Pik3ap1 display increased IL-10, Il-12 and TNF pro-inflammatory cytokine secretion upon activation of the Toll-like receptors TLR4, TLR7 and TLR9.</text>
</comment>
<keyword id="KW-0025">Alternative splicing</keyword>
<keyword id="KW-1003">Cell membrane</keyword>
<keyword id="KW-0963">Cytoplasm</keyword>
<keyword id="KW-0472">Membrane</keyword>
<keyword id="KW-0597">Phosphoprotein</keyword>
<keyword id="KW-1185">Reference proteome</keyword>
<sequence>MAASGWGRGCDILIFYSPDAEEWCQYLQDLFVSCRQVRSQKTQTYRLVPDASFSAQDLWVFRDARCVLVLLSAGLVGCFGQPGLLPMLQRACHPPQRVVRLLCGVQPGDEDFQAFFPDWAHWQEMTCDDEPETYLAAVRKAISEDSGCDSVTDTEPEDERELPFSKQTNLPPEISPGNLMVVQPDRIRCGAETTVYIIVRCKLDEKVSTEAEFSPEDSPSIRVEGTLENEYTVSVKAPDLSSGNVSLKVYSGDLVVCETTVSYYTDMEEIGNLLSSAANPVEFMCQAFKIVPYNTETLDKLLTESLKNNIPASGLHLFGINQLEEDDMMTNQRDEELPTLLHFAAKYGLKNLTALLLTCPGALQAYSVANKHGHYPNTIAEKHGFRDLRQFIDEYVETVDMLKTHIKEELMQGEEADDVYESMAHLSTDLLMKCSLNPGCDDELYESMAAFAPAATEDLYVEMLQASAGNPVSGESFSRPTKDSMIRKFLEGNSVKPASWEREQHHPYGEELYHIVDEDETFSVDLANRPPVPVPRPEASAPGPPPPPDNEPYISKVFAEKSQERLGNFYVSSESIRKEPLVRPWRDRPPSSIYDPFAGMKTPGQRQLITLQEQVKLGIVNVDEAVLHFKEWQLNQKKRSESFRFQQENLKRLRESITRRRKEKPKSGKHTDLEITVPIRHSQHLPEKVEFGVYESGPRKSVLPARTELRRGDWKTDSMSSTASSTSNRSSTRSLLSVSSGMEGDNEDNEIPEITRSRGPGPTQVDGAPVVTGTPVGTLERPPRVPPRAASQRPLTRESFHPPPPVPPRGR</sequence>
<name>BCAP_MOUSE</name>